<feature type="chain" id="PRO_0000323413" description="Large ribosomal subunit protein uL22">
    <location>
        <begin position="1"/>
        <end position="186"/>
    </location>
</feature>
<feature type="region of interest" description="Disordered" evidence="1">
    <location>
        <begin position="161"/>
        <end position="186"/>
    </location>
</feature>
<feature type="compositionally biased region" description="Basic and acidic residues" evidence="1">
    <location>
        <begin position="177"/>
        <end position="186"/>
    </location>
</feature>
<keyword id="KW-1185">Reference proteome</keyword>
<keyword id="KW-0687">Ribonucleoprotein</keyword>
<keyword id="KW-0689">Ribosomal protein</keyword>
<gene>
    <name type="primary">RpL17</name>
    <name type="ORF">GA16622</name>
</gene>
<accession>Q29IM3</accession>
<protein>
    <recommendedName>
        <fullName evidence="2">Large ribosomal subunit protein uL22</fullName>
    </recommendedName>
    <alternativeName>
        <fullName>60S ribosomal protein L17</fullName>
    </alternativeName>
</protein>
<proteinExistence type="inferred from homology"/>
<evidence type="ECO:0000256" key="1">
    <source>
        <dbReference type="SAM" id="MobiDB-lite"/>
    </source>
</evidence>
<evidence type="ECO:0000305" key="2"/>
<sequence length="186" mass="21609">MGRYSRESDNVTKSCKARGPNLRVHFKNTHETAQAIKRMPLRRAQRFLKAVIDQKECVPFRRFNGGVGRCAQAKQWKTTQGRWPKKSAEFLLQLLRNAEANADCKGLDADRMVVHHIQVNRAQCLRRRTYRAHGRINPYMSSPCHVEVILTEKEEVVSKAVDDEPAKKKLSKKKLQRQKEKMLRSE</sequence>
<reference key="1">
    <citation type="journal article" date="2005" name="Genome Res.">
        <title>Comparative genome sequencing of Drosophila pseudoobscura: chromosomal, gene, and cis-element evolution.</title>
        <authorList>
            <person name="Richards S."/>
            <person name="Liu Y."/>
            <person name="Bettencourt B.R."/>
            <person name="Hradecky P."/>
            <person name="Letovsky S."/>
            <person name="Nielsen R."/>
            <person name="Thornton K."/>
            <person name="Hubisz M.J."/>
            <person name="Chen R."/>
            <person name="Meisel R.P."/>
            <person name="Couronne O."/>
            <person name="Hua S."/>
            <person name="Smith M.A."/>
            <person name="Zhang P."/>
            <person name="Liu J."/>
            <person name="Bussemaker H.J."/>
            <person name="van Batenburg M.F."/>
            <person name="Howells S.L."/>
            <person name="Scherer S.E."/>
            <person name="Sodergren E."/>
            <person name="Matthews B.B."/>
            <person name="Crosby M.A."/>
            <person name="Schroeder A.J."/>
            <person name="Ortiz-Barrientos D."/>
            <person name="Rives C.M."/>
            <person name="Metzker M.L."/>
            <person name="Muzny D.M."/>
            <person name="Scott G."/>
            <person name="Steffen D."/>
            <person name="Wheeler D.A."/>
            <person name="Worley K.C."/>
            <person name="Havlak P."/>
            <person name="Durbin K.J."/>
            <person name="Egan A."/>
            <person name="Gill R."/>
            <person name="Hume J."/>
            <person name="Morgan M.B."/>
            <person name="Miner G."/>
            <person name="Hamilton C."/>
            <person name="Huang Y."/>
            <person name="Waldron L."/>
            <person name="Verduzco D."/>
            <person name="Clerc-Blankenburg K.P."/>
            <person name="Dubchak I."/>
            <person name="Noor M.A.F."/>
            <person name="Anderson W."/>
            <person name="White K.P."/>
            <person name="Clark A.G."/>
            <person name="Schaeffer S.W."/>
            <person name="Gelbart W.M."/>
            <person name="Weinstock G.M."/>
            <person name="Gibbs R.A."/>
        </authorList>
    </citation>
    <scope>NUCLEOTIDE SEQUENCE [LARGE SCALE GENOMIC DNA]</scope>
    <source>
        <strain>MV2-25 / Tucson 14011-0121.94</strain>
    </source>
</reference>
<comment type="similarity">
    <text evidence="2">Belongs to the universal ribosomal protein uL22 family.</text>
</comment>
<name>RL17_DROPS</name>
<dbReference type="EMBL" id="CH379063">
    <property type="protein sequence ID" value="EAL32630.1"/>
    <property type="molecule type" value="Genomic_DNA"/>
</dbReference>
<dbReference type="RefSeq" id="XP_001355571.1">
    <property type="nucleotide sequence ID" value="XM_001355535.3"/>
</dbReference>
<dbReference type="SMR" id="Q29IM3"/>
<dbReference type="FunCoup" id="Q29IM3">
    <property type="interactions" value="767"/>
</dbReference>
<dbReference type="STRING" id="46245.Q29IM3"/>
<dbReference type="EnsemblMetazoa" id="FBtr0275084">
    <property type="protein sequence ID" value="FBpp0273522"/>
    <property type="gene ID" value="FBgn0076637"/>
</dbReference>
<dbReference type="GeneID" id="4815497"/>
<dbReference type="KEGG" id="dpo:4815497"/>
<dbReference type="CTD" id="6139"/>
<dbReference type="eggNOG" id="KOG3353">
    <property type="taxonomic scope" value="Eukaryota"/>
</dbReference>
<dbReference type="HOGENOM" id="CLU_083987_0_1_1"/>
<dbReference type="InParanoid" id="Q29IM3"/>
<dbReference type="OMA" id="QVNHAPC"/>
<dbReference type="PhylomeDB" id="Q29IM3"/>
<dbReference type="ChiTaRS" id="RpL17">
    <property type="organism name" value="fly"/>
</dbReference>
<dbReference type="Proteomes" id="UP000001819">
    <property type="component" value="Chromosome X"/>
</dbReference>
<dbReference type="Bgee" id="FBgn0076637">
    <property type="expression patterns" value="Expressed in female reproductive system and 2 other cell types or tissues"/>
</dbReference>
<dbReference type="ExpressionAtlas" id="Q29IM3">
    <property type="expression patterns" value="baseline"/>
</dbReference>
<dbReference type="GO" id="GO:0022625">
    <property type="term" value="C:cytosolic large ribosomal subunit"/>
    <property type="evidence" value="ECO:0007669"/>
    <property type="project" value="TreeGrafter"/>
</dbReference>
<dbReference type="GO" id="GO:0003735">
    <property type="term" value="F:structural constituent of ribosome"/>
    <property type="evidence" value="ECO:0007669"/>
    <property type="project" value="InterPro"/>
</dbReference>
<dbReference type="GO" id="GO:0002181">
    <property type="term" value="P:cytoplasmic translation"/>
    <property type="evidence" value="ECO:0007669"/>
    <property type="project" value="TreeGrafter"/>
</dbReference>
<dbReference type="CDD" id="cd00336">
    <property type="entry name" value="Ribosomal_L22"/>
    <property type="match status" value="1"/>
</dbReference>
<dbReference type="FunFam" id="3.90.470.10:FF:000003">
    <property type="entry name" value="60S ribosomal protein L17"/>
    <property type="match status" value="1"/>
</dbReference>
<dbReference type="Gene3D" id="3.90.470.10">
    <property type="entry name" value="Ribosomal protein L22/L17"/>
    <property type="match status" value="1"/>
</dbReference>
<dbReference type="InterPro" id="IPR001063">
    <property type="entry name" value="Ribosomal_uL22"/>
</dbReference>
<dbReference type="InterPro" id="IPR018260">
    <property type="entry name" value="Ribosomal_uL22_CS"/>
</dbReference>
<dbReference type="InterPro" id="IPR005721">
    <property type="entry name" value="Ribosomal_uL22_euk/arc"/>
</dbReference>
<dbReference type="InterPro" id="IPR036394">
    <property type="entry name" value="Ribosomal_uL22_sf"/>
</dbReference>
<dbReference type="NCBIfam" id="NF003260">
    <property type="entry name" value="PRK04223.1"/>
    <property type="match status" value="1"/>
</dbReference>
<dbReference type="NCBIfam" id="TIGR01038">
    <property type="entry name" value="uL22_arch_euk"/>
    <property type="match status" value="1"/>
</dbReference>
<dbReference type="PANTHER" id="PTHR11593">
    <property type="entry name" value="60S RIBOSOMAL PROTEIN L17"/>
    <property type="match status" value="1"/>
</dbReference>
<dbReference type="PANTHER" id="PTHR11593:SF10">
    <property type="entry name" value="60S RIBOSOMAL PROTEIN L17"/>
    <property type="match status" value="1"/>
</dbReference>
<dbReference type="Pfam" id="PF00237">
    <property type="entry name" value="Ribosomal_L22"/>
    <property type="match status" value="1"/>
</dbReference>
<dbReference type="SUPFAM" id="SSF54843">
    <property type="entry name" value="Ribosomal protein L22"/>
    <property type="match status" value="1"/>
</dbReference>
<dbReference type="PROSITE" id="PS00464">
    <property type="entry name" value="RIBOSOMAL_L22"/>
    <property type="match status" value="1"/>
</dbReference>
<organism>
    <name type="scientific">Drosophila pseudoobscura pseudoobscura</name>
    <name type="common">Fruit fly</name>
    <dbReference type="NCBI Taxonomy" id="46245"/>
    <lineage>
        <taxon>Eukaryota</taxon>
        <taxon>Metazoa</taxon>
        <taxon>Ecdysozoa</taxon>
        <taxon>Arthropoda</taxon>
        <taxon>Hexapoda</taxon>
        <taxon>Insecta</taxon>
        <taxon>Pterygota</taxon>
        <taxon>Neoptera</taxon>
        <taxon>Endopterygota</taxon>
        <taxon>Diptera</taxon>
        <taxon>Brachycera</taxon>
        <taxon>Muscomorpha</taxon>
        <taxon>Ephydroidea</taxon>
        <taxon>Drosophilidae</taxon>
        <taxon>Drosophila</taxon>
        <taxon>Sophophora</taxon>
    </lineage>
</organism>